<keyword id="KW-0539">Nucleus</keyword>
<keyword id="KW-0597">Phosphoprotein</keyword>
<keyword id="KW-1185">Reference proteome</keyword>
<name>YB33_SCHPO</name>
<evidence type="ECO:0000256" key="1">
    <source>
        <dbReference type="SAM" id="MobiDB-lite"/>
    </source>
</evidence>
<evidence type="ECO:0000269" key="2">
    <source>
    </source>
</evidence>
<evidence type="ECO:0000269" key="3">
    <source>
    </source>
</evidence>
<comment type="subcellular location">
    <subcellularLocation>
        <location evidence="2">Nucleus</location>
    </subcellularLocation>
</comment>
<dbReference type="EMBL" id="CU329671">
    <property type="protein sequence ID" value="CAB10152.1"/>
    <property type="molecule type" value="Genomic_DNA"/>
</dbReference>
<dbReference type="EMBL" id="AB027993">
    <property type="protein sequence ID" value="BAA87297.1"/>
    <property type="molecule type" value="Genomic_DNA"/>
</dbReference>
<dbReference type="PIR" id="T40137">
    <property type="entry name" value="T40137"/>
</dbReference>
<dbReference type="BioGRID" id="276875">
    <property type="interactions" value="98"/>
</dbReference>
<dbReference type="FunCoup" id="O14338">
    <property type="interactions" value="9"/>
</dbReference>
<dbReference type="STRING" id="284812.O14338"/>
<dbReference type="iPTMnet" id="O14338"/>
<dbReference type="PaxDb" id="4896-SPBC2F12.03c.1"/>
<dbReference type="EnsemblFungi" id="SPBC2F12.03c.1">
    <property type="protein sequence ID" value="SPBC2F12.03c.1:pep"/>
    <property type="gene ID" value="SPBC2F12.03c"/>
</dbReference>
<dbReference type="KEGG" id="spo:2540346"/>
<dbReference type="PomBase" id="SPBC2F12.03c"/>
<dbReference type="VEuPathDB" id="FungiDB:SPBC2F12.03c"/>
<dbReference type="eggNOG" id="ENOG502R7AH">
    <property type="taxonomic scope" value="Eukaryota"/>
</dbReference>
<dbReference type="HOGENOM" id="CLU_328770_0_0_1"/>
<dbReference type="InParanoid" id="O14338"/>
<dbReference type="OMA" id="MSARDSC"/>
<dbReference type="Reactome" id="R-SPO-975957">
    <property type="pathway name" value="Nonsense Mediated Decay (NMD) enhanced by the Exon Junction Complex (EJC)"/>
</dbReference>
<dbReference type="PRO" id="PR:O14338"/>
<dbReference type="Proteomes" id="UP000002485">
    <property type="component" value="Chromosome II"/>
</dbReference>
<dbReference type="GO" id="GO:0032153">
    <property type="term" value="C:cell division site"/>
    <property type="evidence" value="ECO:0007005"/>
    <property type="project" value="PomBase"/>
</dbReference>
<dbReference type="GO" id="GO:0005737">
    <property type="term" value="C:cytoplasm"/>
    <property type="evidence" value="ECO:0007005"/>
    <property type="project" value="PomBase"/>
</dbReference>
<dbReference type="GO" id="GO:0005829">
    <property type="term" value="C:cytosol"/>
    <property type="evidence" value="ECO:0007005"/>
    <property type="project" value="PomBase"/>
</dbReference>
<dbReference type="GO" id="GO:0005697">
    <property type="term" value="C:telomerase holoenzyme complex"/>
    <property type="evidence" value="ECO:0000318"/>
    <property type="project" value="GO_Central"/>
</dbReference>
<dbReference type="GO" id="GO:0070034">
    <property type="term" value="F:telomerase RNA binding"/>
    <property type="evidence" value="ECO:0000318"/>
    <property type="project" value="GO_Central"/>
</dbReference>
<dbReference type="GO" id="GO:0042162">
    <property type="term" value="F:telomeric DNA binding"/>
    <property type="evidence" value="ECO:0000318"/>
    <property type="project" value="GO_Central"/>
</dbReference>
<dbReference type="GO" id="GO:0000184">
    <property type="term" value="P:nuclear-transcribed mRNA catabolic process, nonsense-mediated decay"/>
    <property type="evidence" value="ECO:0000318"/>
    <property type="project" value="GO_Central"/>
</dbReference>
<dbReference type="Gene3D" id="1.25.40.10">
    <property type="entry name" value="Tetratricopeptide repeat domain"/>
    <property type="match status" value="1"/>
</dbReference>
<dbReference type="InterPro" id="IPR018834">
    <property type="entry name" value="DNA/RNA-bd_Est1-type"/>
</dbReference>
<dbReference type="InterPro" id="IPR019458">
    <property type="entry name" value="Est1-like_N"/>
</dbReference>
<dbReference type="InterPro" id="IPR045153">
    <property type="entry name" value="Est1/Ebs1-like"/>
</dbReference>
<dbReference type="InterPro" id="IPR011990">
    <property type="entry name" value="TPR-like_helical_dom_sf"/>
</dbReference>
<dbReference type="PANTHER" id="PTHR15696">
    <property type="entry name" value="SMG-7 SUPPRESSOR WITH MORPHOLOGICAL EFFECT ON GENITALIA PROTEIN 7"/>
    <property type="match status" value="1"/>
</dbReference>
<dbReference type="PANTHER" id="PTHR15696:SF0">
    <property type="entry name" value="TELOMERASE-BINDING PROTEIN EST1A"/>
    <property type="match status" value="1"/>
</dbReference>
<dbReference type="Pfam" id="PF10374">
    <property type="entry name" value="EST1"/>
    <property type="match status" value="1"/>
</dbReference>
<dbReference type="Pfam" id="PF10373">
    <property type="entry name" value="EST1_DNA_bind"/>
    <property type="match status" value="1"/>
</dbReference>
<dbReference type="SUPFAM" id="SSF48452">
    <property type="entry name" value="TPR-like"/>
    <property type="match status" value="1"/>
</dbReference>
<sequence>MSAIDSCEHTVSWKLCEQKYNEATTLLSKLKKLLGNFKENCTSVVVDGHKKPRSESRKKYDAKKQHQSSHFATPVKGVESSEPTEKKKRNKEALWLRARQKKWKEIFELCQKITSLLGGTILIDVSFSMEKDVLTYLWMRVHYQVISFFKHRIYEASTQHDPELLSSLVTMHIQYLNSTIQFYTTLIAIIGELYHLQCLSPLTSFFTSCVTPKTILESPLRKQGSHNWKTSTNSQSRLAALFSSIFEDSCLEVDSVKRLLSGSPSSSSSPLKKDSSSNSLTYEPALTDHKPQYLVLCVYRSLIYIGDVHRYLAEVRSPNVPDYQVSRRYYVMAANVAPDYGVHFHQLGLIEVADARSSSRKSSSGQSSSLKGNVNVEDKRLIQALPAISFFFLSSISPNNVAASSAKTSLFIALKRCFGKTNDGSNPCLYHKESSAISLFLRLYAIAFSNTDADYIQDSGPLFKRVRFLLSESLKSGLFSESSLLQMTYCALAARVLAPFIGFSDSGEHGESYPNLKLATQTTTMFFEVLSDSVNSQLPLQALTSGVSSKKDGNFDDLVERRQYGSLSSNAVLMPMLLPLCVLTSSCLQNGDVWLTKDIRTGLSQIFNRLSFFLENTNQTAPDDSVLVRCSSKSIGLLFFFPLVKVCGVPRDTLQWLYFSNHYPFNEEGKGPQVDDSDALITIALDSLYVLLNMRAKSTPNSTSFSSPPTPHRSPFSGQAFTGMGLSNYSLMSSSSFPSAQSSPTSPFLSGTPSIANQSSSIASLQFGRMVDSLVGPVQPIPAQTTGCSVHSLQQRTFSNESPRAVDSGFSRTSTPFSESTSSYPLVSGNLSSCETHLNGSPQNGHLQGERVLFRPLRSPALNTFSTPATEPPEHLVLSELLKKMVNISNN</sequence>
<protein>
    <recommendedName>
        <fullName>Uncharacterized serine-rich protein C2F12.03c</fullName>
    </recommendedName>
</protein>
<gene>
    <name type="ORF">SPBC2F12.03c</name>
</gene>
<organism>
    <name type="scientific">Schizosaccharomyces pombe (strain 972 / ATCC 24843)</name>
    <name type="common">Fission yeast</name>
    <dbReference type="NCBI Taxonomy" id="284812"/>
    <lineage>
        <taxon>Eukaryota</taxon>
        <taxon>Fungi</taxon>
        <taxon>Dikarya</taxon>
        <taxon>Ascomycota</taxon>
        <taxon>Taphrinomycotina</taxon>
        <taxon>Schizosaccharomycetes</taxon>
        <taxon>Schizosaccharomycetales</taxon>
        <taxon>Schizosaccharomycetaceae</taxon>
        <taxon>Schizosaccharomyces</taxon>
    </lineage>
</organism>
<reference key="1">
    <citation type="journal article" date="2002" name="Nature">
        <title>The genome sequence of Schizosaccharomyces pombe.</title>
        <authorList>
            <person name="Wood V."/>
            <person name="Gwilliam R."/>
            <person name="Rajandream M.A."/>
            <person name="Lyne M.H."/>
            <person name="Lyne R."/>
            <person name="Stewart A."/>
            <person name="Sgouros J.G."/>
            <person name="Peat N."/>
            <person name="Hayles J."/>
            <person name="Baker S.G."/>
            <person name="Basham D."/>
            <person name="Bowman S."/>
            <person name="Brooks K."/>
            <person name="Brown D."/>
            <person name="Brown S."/>
            <person name="Chillingworth T."/>
            <person name="Churcher C.M."/>
            <person name="Collins M."/>
            <person name="Connor R."/>
            <person name="Cronin A."/>
            <person name="Davis P."/>
            <person name="Feltwell T."/>
            <person name="Fraser A."/>
            <person name="Gentles S."/>
            <person name="Goble A."/>
            <person name="Hamlin N."/>
            <person name="Harris D.E."/>
            <person name="Hidalgo J."/>
            <person name="Hodgson G."/>
            <person name="Holroyd S."/>
            <person name="Hornsby T."/>
            <person name="Howarth S."/>
            <person name="Huckle E.J."/>
            <person name="Hunt S."/>
            <person name="Jagels K."/>
            <person name="James K.D."/>
            <person name="Jones L."/>
            <person name="Jones M."/>
            <person name="Leather S."/>
            <person name="McDonald S."/>
            <person name="McLean J."/>
            <person name="Mooney P."/>
            <person name="Moule S."/>
            <person name="Mungall K.L."/>
            <person name="Murphy L.D."/>
            <person name="Niblett D."/>
            <person name="Odell C."/>
            <person name="Oliver K."/>
            <person name="O'Neil S."/>
            <person name="Pearson D."/>
            <person name="Quail M.A."/>
            <person name="Rabbinowitsch E."/>
            <person name="Rutherford K.M."/>
            <person name="Rutter S."/>
            <person name="Saunders D."/>
            <person name="Seeger K."/>
            <person name="Sharp S."/>
            <person name="Skelton J."/>
            <person name="Simmonds M.N."/>
            <person name="Squares R."/>
            <person name="Squares S."/>
            <person name="Stevens K."/>
            <person name="Taylor K."/>
            <person name="Taylor R.G."/>
            <person name="Tivey A."/>
            <person name="Walsh S.V."/>
            <person name="Warren T."/>
            <person name="Whitehead S."/>
            <person name="Woodward J.R."/>
            <person name="Volckaert G."/>
            <person name="Aert R."/>
            <person name="Robben J."/>
            <person name="Grymonprez B."/>
            <person name="Weltjens I."/>
            <person name="Vanstreels E."/>
            <person name="Rieger M."/>
            <person name="Schaefer M."/>
            <person name="Mueller-Auer S."/>
            <person name="Gabel C."/>
            <person name="Fuchs M."/>
            <person name="Duesterhoeft A."/>
            <person name="Fritzc C."/>
            <person name="Holzer E."/>
            <person name="Moestl D."/>
            <person name="Hilbert H."/>
            <person name="Borzym K."/>
            <person name="Langer I."/>
            <person name="Beck A."/>
            <person name="Lehrach H."/>
            <person name="Reinhardt R."/>
            <person name="Pohl T.M."/>
            <person name="Eger P."/>
            <person name="Zimmermann W."/>
            <person name="Wedler H."/>
            <person name="Wambutt R."/>
            <person name="Purnelle B."/>
            <person name="Goffeau A."/>
            <person name="Cadieu E."/>
            <person name="Dreano S."/>
            <person name="Gloux S."/>
            <person name="Lelaure V."/>
            <person name="Mottier S."/>
            <person name="Galibert F."/>
            <person name="Aves S.J."/>
            <person name="Xiang Z."/>
            <person name="Hunt C."/>
            <person name="Moore K."/>
            <person name="Hurst S.M."/>
            <person name="Lucas M."/>
            <person name="Rochet M."/>
            <person name="Gaillardin C."/>
            <person name="Tallada V.A."/>
            <person name="Garzon A."/>
            <person name="Thode G."/>
            <person name="Daga R.R."/>
            <person name="Cruzado L."/>
            <person name="Jimenez J."/>
            <person name="Sanchez M."/>
            <person name="del Rey F."/>
            <person name="Benito J."/>
            <person name="Dominguez A."/>
            <person name="Revuelta J.L."/>
            <person name="Moreno S."/>
            <person name="Armstrong J."/>
            <person name="Forsburg S.L."/>
            <person name="Cerutti L."/>
            <person name="Lowe T."/>
            <person name="McCombie W.R."/>
            <person name="Paulsen I."/>
            <person name="Potashkin J."/>
            <person name="Shpakovski G.V."/>
            <person name="Ussery D."/>
            <person name="Barrell B.G."/>
            <person name="Nurse P."/>
        </authorList>
    </citation>
    <scope>NUCLEOTIDE SEQUENCE [LARGE SCALE GENOMIC DNA]</scope>
    <source>
        <strain>972 / ATCC 24843</strain>
    </source>
</reference>
<reference key="2">
    <citation type="journal article" date="2000" name="Genes Cells">
        <title>Large-scale screening of intracellular protein localization in living fission yeast cells by the use of a GFP-fusion genomic DNA library.</title>
        <authorList>
            <person name="Ding D.-Q."/>
            <person name="Tomita Y."/>
            <person name="Yamamoto A."/>
            <person name="Chikashige Y."/>
            <person name="Haraguchi T."/>
            <person name="Hiraoka Y."/>
        </authorList>
    </citation>
    <scope>NUCLEOTIDE SEQUENCE [LARGE SCALE GENOMIC DNA] OF 88-288</scope>
    <scope>SUBCELLULAR LOCATION</scope>
    <source>
        <strain>ATCC 38364 / 968</strain>
    </source>
</reference>
<reference key="3">
    <citation type="journal article" date="2008" name="J. Proteome Res.">
        <title>Phosphoproteome analysis of fission yeast.</title>
        <authorList>
            <person name="Wilson-Grady J.T."/>
            <person name="Villen J."/>
            <person name="Gygi S.P."/>
        </authorList>
    </citation>
    <scope>PHOSPHORYLATION [LARGE SCALE ANALYSIS] AT SER-261; SER-263; SER-265 AND SER-268</scope>
    <scope>IDENTIFICATION BY MASS SPECTROMETRY</scope>
</reference>
<feature type="chain" id="PRO_0000116497" description="Uncharacterized serine-rich protein C2F12.03c">
    <location>
        <begin position="1"/>
        <end position="891"/>
    </location>
</feature>
<feature type="region of interest" description="Disordered" evidence="1">
    <location>
        <begin position="48"/>
        <end position="86"/>
    </location>
</feature>
<feature type="region of interest" description="Disordered" evidence="1">
    <location>
        <begin position="795"/>
        <end position="822"/>
    </location>
</feature>
<feature type="compositionally biased region" description="Basic and acidic residues" evidence="1">
    <location>
        <begin position="48"/>
        <end position="64"/>
    </location>
</feature>
<feature type="compositionally biased region" description="Polar residues" evidence="1">
    <location>
        <begin position="810"/>
        <end position="822"/>
    </location>
</feature>
<feature type="modified residue" description="Phosphoserine" evidence="3">
    <location>
        <position position="261"/>
    </location>
</feature>
<feature type="modified residue" description="Phosphoserine" evidence="3">
    <location>
        <position position="263"/>
    </location>
</feature>
<feature type="modified residue" description="Phosphoserine" evidence="3">
    <location>
        <position position="265"/>
    </location>
</feature>
<feature type="modified residue" description="Phosphoserine" evidence="3">
    <location>
        <position position="268"/>
    </location>
</feature>
<accession>O14338</accession>
<accession>Q9US77</accession>
<proteinExistence type="evidence at protein level"/>